<protein>
    <recommendedName>
        <fullName>Immunity protein</fullName>
    </recommendedName>
</protein>
<accession>P06650</accession>
<name>IMMU_BPSPB</name>
<organismHost>
    <name type="scientific">Bacillus pumilus</name>
    <name type="common">Bacillus mesentericus</name>
    <dbReference type="NCBI Taxonomy" id="1408"/>
</organismHost>
<organismHost>
    <name type="scientific">Bacillus subtilis</name>
    <dbReference type="NCBI Taxonomy" id="1423"/>
</organismHost>
<organism>
    <name type="scientific">Bacillus phage SPbeta</name>
    <name type="common">Bacillus phage SPBc2</name>
    <name type="synonym">Bacteriophage SP-beta</name>
    <dbReference type="NCBI Taxonomy" id="2932878"/>
    <lineage>
        <taxon>Viruses</taxon>
        <taxon>Duplodnaviria</taxon>
        <taxon>Heunggongvirae</taxon>
        <taxon>Uroviricota</taxon>
        <taxon>Caudoviricetes</taxon>
        <taxon>Spbetavirus</taxon>
        <taxon>Spbetavirus SPbeta</taxon>
    </lineage>
</organism>
<feature type="chain" id="PRO_0000077575" description="Immunity protein">
    <location>
        <begin position="1"/>
        <end position="201"/>
    </location>
</feature>
<sequence length="201" mass="22087">MGICLIIVGLALLALEPYKIKAPKNIDKLKENAETLKHFDGGFNPDNFFNTYKTKIAFKESDSLVKIYQLNKDEHIEEYTIPFSNVIESEIALDNQIISKVSKSGIVAGGLLAGGIGAAIGGLSASSIQNEMVKSVTLKITVEDLGKPIHYIDFLPTQEVEGYNIQGYKKDSNVIQQALTNAEYWHGVMDVIIKKANKVAQ</sequence>
<proteinExistence type="predicted"/>
<gene>
    <name type="primary">D</name>
</gene>
<dbReference type="EMBL" id="M13821">
    <property type="protein sequence ID" value="AAA88544.1"/>
    <property type="molecule type" value="Genomic_DNA"/>
</dbReference>
<dbReference type="PIR" id="A24499">
    <property type="entry name" value="IMBPSB"/>
</dbReference>
<reference key="1">
    <citation type="journal article" date="1986" name="J. Bacteriol.">
        <title>Control of lysogeny and immunity of Bacillus subtilis temperate bacteriophage SP beta by its d gene.</title>
        <authorList>
            <person name="McLaughlin J.R."/>
            <person name="Wong H.C."/>
            <person name="Ting Y.E."/>
            <person name="van Arsdell J.N."/>
            <person name="Chang S."/>
        </authorList>
    </citation>
    <scope>NUCLEOTIDE SEQUENCE [GENOMIC DNA]</scope>
    <source>
        <strain>C2</strain>
    </source>
</reference>